<keyword id="KW-0963">Cytoplasm</keyword>
<keyword id="KW-0378">Hydrolase</keyword>
<keyword id="KW-0546">Nucleotide metabolism</keyword>
<keyword id="KW-1185">Reference proteome</keyword>
<name>NTPPB_PSET1</name>
<evidence type="ECO:0000255" key="1">
    <source>
        <dbReference type="HAMAP-Rule" id="MF_00528"/>
    </source>
</evidence>
<reference key="1">
    <citation type="journal article" date="2005" name="Genome Res.">
        <title>Coping with cold: the genome of the versatile marine Antarctica bacterium Pseudoalteromonas haloplanktis TAC125.</title>
        <authorList>
            <person name="Medigue C."/>
            <person name="Krin E."/>
            <person name="Pascal G."/>
            <person name="Barbe V."/>
            <person name="Bernsel A."/>
            <person name="Bertin P.N."/>
            <person name="Cheung F."/>
            <person name="Cruveiller S."/>
            <person name="D'Amico S."/>
            <person name="Duilio A."/>
            <person name="Fang G."/>
            <person name="Feller G."/>
            <person name="Ho C."/>
            <person name="Mangenot S."/>
            <person name="Marino G."/>
            <person name="Nilsson J."/>
            <person name="Parrilli E."/>
            <person name="Rocha E.P.C."/>
            <person name="Rouy Z."/>
            <person name="Sekowska A."/>
            <person name="Tutino M.L."/>
            <person name="Vallenet D."/>
            <person name="von Heijne G."/>
            <person name="Danchin A."/>
        </authorList>
    </citation>
    <scope>NUCLEOTIDE SEQUENCE [LARGE SCALE GENOMIC DNA]</scope>
    <source>
        <strain>TAC 125</strain>
    </source>
</reference>
<protein>
    <recommendedName>
        <fullName evidence="1">7-methyl-GTP pyrophosphatase</fullName>
        <shortName evidence="1">m(7)GTP pyrophosphatase</shortName>
        <ecNumber evidence="1">3.6.1.-</ecNumber>
    </recommendedName>
</protein>
<feature type="chain" id="PRO_0000267376" description="7-methyl-GTP pyrophosphatase">
    <location>
        <begin position="1"/>
        <end position="202"/>
    </location>
</feature>
<feature type="active site" description="Proton acceptor" evidence="1">
    <location>
        <position position="70"/>
    </location>
</feature>
<feature type="site" description="Important for substrate specificity" evidence="1">
    <location>
        <position position="13"/>
    </location>
</feature>
<feature type="site" description="Important for substrate specificity" evidence="1">
    <location>
        <position position="71"/>
    </location>
</feature>
<feature type="site" description="Important for substrate specificity" evidence="1">
    <location>
        <position position="155"/>
    </location>
</feature>
<dbReference type="EC" id="3.6.1.-" evidence="1"/>
<dbReference type="EMBL" id="CR954246">
    <property type="protein sequence ID" value="CAI86885.1"/>
    <property type="molecule type" value="Genomic_DNA"/>
</dbReference>
<dbReference type="SMR" id="Q3IHD5"/>
<dbReference type="STRING" id="326442.PSHAa1813"/>
<dbReference type="KEGG" id="pha:PSHAa1813"/>
<dbReference type="PATRIC" id="fig|326442.8.peg.1760"/>
<dbReference type="eggNOG" id="COG0424">
    <property type="taxonomic scope" value="Bacteria"/>
</dbReference>
<dbReference type="HOGENOM" id="CLU_040416_1_0_6"/>
<dbReference type="BioCyc" id="PHAL326442:PSHA_RS08890-MONOMER"/>
<dbReference type="Proteomes" id="UP000006843">
    <property type="component" value="Chromosome I"/>
</dbReference>
<dbReference type="GO" id="GO:0005737">
    <property type="term" value="C:cytoplasm"/>
    <property type="evidence" value="ECO:0007669"/>
    <property type="project" value="UniProtKB-SubCell"/>
</dbReference>
<dbReference type="GO" id="GO:0047429">
    <property type="term" value="F:nucleoside triphosphate diphosphatase activity"/>
    <property type="evidence" value="ECO:0007669"/>
    <property type="project" value="InterPro"/>
</dbReference>
<dbReference type="GO" id="GO:0009117">
    <property type="term" value="P:nucleotide metabolic process"/>
    <property type="evidence" value="ECO:0007669"/>
    <property type="project" value="UniProtKB-KW"/>
</dbReference>
<dbReference type="CDD" id="cd00555">
    <property type="entry name" value="Maf"/>
    <property type="match status" value="1"/>
</dbReference>
<dbReference type="FunFam" id="3.90.950.10:FF:000005">
    <property type="entry name" value="7-methyl-GTP pyrophosphatase"/>
    <property type="match status" value="1"/>
</dbReference>
<dbReference type="Gene3D" id="3.90.950.10">
    <property type="match status" value="1"/>
</dbReference>
<dbReference type="HAMAP" id="MF_00528">
    <property type="entry name" value="Maf"/>
    <property type="match status" value="1"/>
</dbReference>
<dbReference type="InterPro" id="IPR029001">
    <property type="entry name" value="ITPase-like_fam"/>
</dbReference>
<dbReference type="InterPro" id="IPR003697">
    <property type="entry name" value="Maf-like"/>
</dbReference>
<dbReference type="NCBIfam" id="TIGR00172">
    <property type="entry name" value="maf"/>
    <property type="match status" value="1"/>
</dbReference>
<dbReference type="PANTHER" id="PTHR43213:SF10">
    <property type="entry name" value="7-METHYL-GTP PYROPHOSPHATASE"/>
    <property type="match status" value="1"/>
</dbReference>
<dbReference type="PANTHER" id="PTHR43213">
    <property type="entry name" value="BIFUNCTIONAL DTTP/UTP PYROPHOSPHATASE/METHYLTRANSFERASE PROTEIN-RELATED"/>
    <property type="match status" value="1"/>
</dbReference>
<dbReference type="Pfam" id="PF02545">
    <property type="entry name" value="Maf"/>
    <property type="match status" value="1"/>
</dbReference>
<dbReference type="PIRSF" id="PIRSF006305">
    <property type="entry name" value="Maf"/>
    <property type="match status" value="1"/>
</dbReference>
<dbReference type="SUPFAM" id="SSF52972">
    <property type="entry name" value="ITPase-like"/>
    <property type="match status" value="1"/>
</dbReference>
<proteinExistence type="inferred from homology"/>
<sequence>MKYPLILASSSLFRQSLLQKFNLPFDTFSPNVDESALNNETPAQLVKRLSELKARAASKHFSKGLVIGSDQVAVFNEQILGKPHNKHNAVKQLSLFSGHSVTFLTGLCVYDLTSGESKTCIEPFNVTFKTLTDAQISAYCDAEQPYNCAGSFKSEGLGICLFEKLTGDDPNSLIGLPLIKLSQLLAEFGLDVLSAQSNTPLS</sequence>
<gene>
    <name type="ordered locus">PSHAa1813</name>
</gene>
<accession>Q3IHD5</accession>
<organism>
    <name type="scientific">Pseudoalteromonas translucida (strain TAC 125)</name>
    <dbReference type="NCBI Taxonomy" id="326442"/>
    <lineage>
        <taxon>Bacteria</taxon>
        <taxon>Pseudomonadati</taxon>
        <taxon>Pseudomonadota</taxon>
        <taxon>Gammaproteobacteria</taxon>
        <taxon>Alteromonadales</taxon>
        <taxon>Pseudoalteromonadaceae</taxon>
        <taxon>Pseudoalteromonas</taxon>
    </lineage>
</organism>
<comment type="function">
    <text evidence="1">Nucleoside triphosphate pyrophosphatase that hydrolyzes 7-methyl-GTP (m(7)GTP). May have a dual role in cell division arrest and in preventing the incorporation of modified nucleotides into cellular nucleic acids.</text>
</comment>
<comment type="catalytic activity">
    <reaction evidence="1">
        <text>N(7)-methyl-GTP + H2O = N(7)-methyl-GMP + diphosphate + H(+)</text>
        <dbReference type="Rhea" id="RHEA:58744"/>
        <dbReference type="ChEBI" id="CHEBI:15377"/>
        <dbReference type="ChEBI" id="CHEBI:15378"/>
        <dbReference type="ChEBI" id="CHEBI:33019"/>
        <dbReference type="ChEBI" id="CHEBI:58285"/>
        <dbReference type="ChEBI" id="CHEBI:87133"/>
    </reaction>
</comment>
<comment type="cofactor">
    <cofactor evidence="1">
        <name>a divalent metal cation</name>
        <dbReference type="ChEBI" id="CHEBI:60240"/>
    </cofactor>
</comment>
<comment type="subcellular location">
    <subcellularLocation>
        <location evidence="1">Cytoplasm</location>
    </subcellularLocation>
</comment>
<comment type="similarity">
    <text evidence="1">Belongs to the Maf family. YceF subfamily.</text>
</comment>